<keyword id="KW-1185">Reference proteome</keyword>
<keyword id="KW-0678">Repressor</keyword>
<keyword id="KW-0687">Ribonucleoprotein</keyword>
<keyword id="KW-0689">Ribosomal protein</keyword>
<keyword id="KW-0694">RNA-binding</keyword>
<keyword id="KW-0699">rRNA-binding</keyword>
<keyword id="KW-0810">Translation regulation</keyword>
<keyword id="KW-0820">tRNA-binding</keyword>
<gene>
    <name evidence="1" type="primary">rplA</name>
    <name type="ordered locus">BH0120</name>
</gene>
<comment type="function">
    <text evidence="1">Binds directly to 23S rRNA. The L1 stalk is quite mobile in the ribosome, and is involved in E site tRNA release.</text>
</comment>
<comment type="function">
    <text evidence="1">Protein L1 is also a translational repressor protein, it controls the translation of the L11 operon by binding to its mRNA.</text>
</comment>
<comment type="subunit">
    <text evidence="1">Part of the 50S ribosomal subunit.</text>
</comment>
<comment type="similarity">
    <text evidence="1">Belongs to the universal ribosomal protein uL1 family.</text>
</comment>
<sequence>MAKRGKKYLEAVKLIDRDQAYQVEEALELVKKASVAKFDETVEVAVRLGVDPKKADQQIRGAVVLPNGTGKTQRVLVFAKGEKAKEAEAAGADYVGDEDCINKISQGWFDFDVIVATPDMMAQVGKLGRVLGPKGLMPNPKTGTVTFEVEKAVNDIKAGKVEYRVDKAGNIHVPIGKVSFDTAKLAENFETIIDTLVKAKPAAAKGTYLKNIAVSSTMGPGVKVSTASFGK</sequence>
<protein>
    <recommendedName>
        <fullName evidence="1">Large ribosomal subunit protein uL1</fullName>
    </recommendedName>
    <alternativeName>
        <fullName evidence="2">50S ribosomal protein L1</fullName>
    </alternativeName>
</protein>
<reference key="1">
    <citation type="journal article" date="2000" name="Nucleic Acids Res.">
        <title>Complete genome sequence of the alkaliphilic bacterium Bacillus halodurans and genomic sequence comparison with Bacillus subtilis.</title>
        <authorList>
            <person name="Takami H."/>
            <person name="Nakasone K."/>
            <person name="Takaki Y."/>
            <person name="Maeno G."/>
            <person name="Sasaki R."/>
            <person name="Masui N."/>
            <person name="Fuji F."/>
            <person name="Hirama C."/>
            <person name="Nakamura Y."/>
            <person name="Ogasawara N."/>
            <person name="Kuhara S."/>
            <person name="Horikoshi K."/>
        </authorList>
    </citation>
    <scope>NUCLEOTIDE SEQUENCE [LARGE SCALE GENOMIC DNA]</scope>
    <source>
        <strain>ATCC BAA-125 / DSM 18197 / FERM 7344 / JCM 9153 / C-125</strain>
    </source>
</reference>
<proteinExistence type="inferred from homology"/>
<organism>
    <name type="scientific">Halalkalibacterium halodurans (strain ATCC BAA-125 / DSM 18197 / FERM 7344 / JCM 9153 / C-125)</name>
    <name type="common">Bacillus halodurans</name>
    <dbReference type="NCBI Taxonomy" id="272558"/>
    <lineage>
        <taxon>Bacteria</taxon>
        <taxon>Bacillati</taxon>
        <taxon>Bacillota</taxon>
        <taxon>Bacilli</taxon>
        <taxon>Bacillales</taxon>
        <taxon>Bacillaceae</taxon>
        <taxon>Halalkalibacterium (ex Joshi et al. 2022)</taxon>
    </lineage>
</organism>
<name>RL1_HALH5</name>
<dbReference type="EMBL" id="BA000004">
    <property type="protein sequence ID" value="BAB03839.1"/>
    <property type="molecule type" value="Genomic_DNA"/>
</dbReference>
<dbReference type="PIR" id="H83664">
    <property type="entry name" value="H83664"/>
</dbReference>
<dbReference type="RefSeq" id="WP_010896303.1">
    <property type="nucleotide sequence ID" value="NC_002570.2"/>
</dbReference>
<dbReference type="SMR" id="Q9KGE5"/>
<dbReference type="STRING" id="272558.gene:10725960"/>
<dbReference type="KEGG" id="bha:BH0120"/>
<dbReference type="eggNOG" id="COG0081">
    <property type="taxonomic scope" value="Bacteria"/>
</dbReference>
<dbReference type="HOGENOM" id="CLU_062853_0_0_9"/>
<dbReference type="OrthoDB" id="9803740at2"/>
<dbReference type="Proteomes" id="UP000001258">
    <property type="component" value="Chromosome"/>
</dbReference>
<dbReference type="GO" id="GO:0015934">
    <property type="term" value="C:large ribosomal subunit"/>
    <property type="evidence" value="ECO:0007669"/>
    <property type="project" value="InterPro"/>
</dbReference>
<dbReference type="GO" id="GO:0019843">
    <property type="term" value="F:rRNA binding"/>
    <property type="evidence" value="ECO:0007669"/>
    <property type="project" value="UniProtKB-UniRule"/>
</dbReference>
<dbReference type="GO" id="GO:0003735">
    <property type="term" value="F:structural constituent of ribosome"/>
    <property type="evidence" value="ECO:0007669"/>
    <property type="project" value="InterPro"/>
</dbReference>
<dbReference type="GO" id="GO:0000049">
    <property type="term" value="F:tRNA binding"/>
    <property type="evidence" value="ECO:0007669"/>
    <property type="project" value="UniProtKB-KW"/>
</dbReference>
<dbReference type="GO" id="GO:0006417">
    <property type="term" value="P:regulation of translation"/>
    <property type="evidence" value="ECO:0007669"/>
    <property type="project" value="UniProtKB-KW"/>
</dbReference>
<dbReference type="GO" id="GO:0006412">
    <property type="term" value="P:translation"/>
    <property type="evidence" value="ECO:0007669"/>
    <property type="project" value="UniProtKB-UniRule"/>
</dbReference>
<dbReference type="CDD" id="cd00403">
    <property type="entry name" value="Ribosomal_L1"/>
    <property type="match status" value="1"/>
</dbReference>
<dbReference type="FunFam" id="3.40.50.790:FF:000001">
    <property type="entry name" value="50S ribosomal protein L1"/>
    <property type="match status" value="1"/>
</dbReference>
<dbReference type="Gene3D" id="3.30.190.20">
    <property type="match status" value="1"/>
</dbReference>
<dbReference type="Gene3D" id="3.40.50.790">
    <property type="match status" value="1"/>
</dbReference>
<dbReference type="HAMAP" id="MF_01318_B">
    <property type="entry name" value="Ribosomal_uL1_B"/>
    <property type="match status" value="1"/>
</dbReference>
<dbReference type="InterPro" id="IPR005878">
    <property type="entry name" value="Ribosom_uL1_bac-type"/>
</dbReference>
<dbReference type="InterPro" id="IPR002143">
    <property type="entry name" value="Ribosomal_uL1"/>
</dbReference>
<dbReference type="InterPro" id="IPR023674">
    <property type="entry name" value="Ribosomal_uL1-like"/>
</dbReference>
<dbReference type="InterPro" id="IPR028364">
    <property type="entry name" value="Ribosomal_uL1/biogenesis"/>
</dbReference>
<dbReference type="InterPro" id="IPR016095">
    <property type="entry name" value="Ribosomal_uL1_3-a/b-sand"/>
</dbReference>
<dbReference type="InterPro" id="IPR023673">
    <property type="entry name" value="Ribosomal_uL1_CS"/>
</dbReference>
<dbReference type="NCBIfam" id="TIGR01169">
    <property type="entry name" value="rplA_bact"/>
    <property type="match status" value="1"/>
</dbReference>
<dbReference type="PANTHER" id="PTHR36427">
    <property type="entry name" value="54S RIBOSOMAL PROTEIN L1, MITOCHONDRIAL"/>
    <property type="match status" value="1"/>
</dbReference>
<dbReference type="PANTHER" id="PTHR36427:SF3">
    <property type="entry name" value="LARGE RIBOSOMAL SUBUNIT PROTEIN UL1M"/>
    <property type="match status" value="1"/>
</dbReference>
<dbReference type="Pfam" id="PF00687">
    <property type="entry name" value="Ribosomal_L1"/>
    <property type="match status" value="1"/>
</dbReference>
<dbReference type="PIRSF" id="PIRSF002155">
    <property type="entry name" value="Ribosomal_L1"/>
    <property type="match status" value="1"/>
</dbReference>
<dbReference type="SUPFAM" id="SSF56808">
    <property type="entry name" value="Ribosomal protein L1"/>
    <property type="match status" value="1"/>
</dbReference>
<dbReference type="PROSITE" id="PS01199">
    <property type="entry name" value="RIBOSOMAL_L1"/>
    <property type="match status" value="1"/>
</dbReference>
<accession>Q9KGE5</accession>
<evidence type="ECO:0000255" key="1">
    <source>
        <dbReference type="HAMAP-Rule" id="MF_01318"/>
    </source>
</evidence>
<evidence type="ECO:0000305" key="2"/>
<feature type="chain" id="PRO_0000125612" description="Large ribosomal subunit protein uL1">
    <location>
        <begin position="1"/>
        <end position="231"/>
    </location>
</feature>